<proteinExistence type="evidence at protein level"/>
<sequence length="12" mass="1548">RIRKPIFAFPRF</sequence>
<reference key="1">
    <citation type="journal article" date="2019" name="Biochem. Pharmacol.">
        <title>Novel conorfamides from Conus austini venom modulate both nicotinic acetylcholine receptors and acid-sensing ion channels.</title>
        <authorList>
            <person name="Jin A.H."/>
            <person name="Cristofori-Armstrong B."/>
            <person name="Rash L.D."/>
            <person name="Roman-Gonzalez S.A."/>
            <person name="Espinosa R.A."/>
            <person name="Lewis R.J."/>
            <person name="Alewood P.F."/>
            <person name="Vetter I."/>
        </authorList>
    </citation>
    <scope>PROTEIN SEQUENCE</scope>
    <scope>FUNCTION</scope>
    <scope>SUBCELLULAR LOCATION</scope>
    <scope>AMIDATION AT PHE-12</scope>
    <scope>MASS SPECTROMETRY</scope>
    <scope>SYNTHESIS</scope>
    <source>
        <tissue>Venom</tissue>
    </source>
</reference>
<evidence type="ECO:0000250" key="1">
    <source>
        <dbReference type="UniProtKB" id="P0DOZ7"/>
    </source>
</evidence>
<evidence type="ECO:0000269" key="2">
    <source>
    </source>
</evidence>
<evidence type="ECO:0000303" key="3">
    <source>
    </source>
</evidence>
<evidence type="ECO:0000305" key="4"/>
<evidence type="ECO:0000305" key="5">
    <source>
    </source>
</evidence>
<dbReference type="GO" id="GO:0005576">
    <property type="term" value="C:extracellular region"/>
    <property type="evidence" value="ECO:0007669"/>
    <property type="project" value="UniProtKB-SubCell"/>
</dbReference>
<dbReference type="GO" id="GO:0035792">
    <property type="term" value="C:host cell postsynaptic membrane"/>
    <property type="evidence" value="ECO:0007669"/>
    <property type="project" value="UniProtKB-KW"/>
</dbReference>
<dbReference type="GO" id="GO:0030550">
    <property type="term" value="F:acetylcholine receptor inhibitor activity"/>
    <property type="evidence" value="ECO:0007669"/>
    <property type="project" value="UniProtKB-KW"/>
</dbReference>
<dbReference type="GO" id="GO:0099106">
    <property type="term" value="F:ion channel regulator activity"/>
    <property type="evidence" value="ECO:0007669"/>
    <property type="project" value="UniProtKB-KW"/>
</dbReference>
<dbReference type="GO" id="GO:0090729">
    <property type="term" value="F:toxin activity"/>
    <property type="evidence" value="ECO:0007669"/>
    <property type="project" value="UniProtKB-KW"/>
</dbReference>
<feature type="peptide" id="PRO_0000447683" description="Conorfamide-As2" evidence="2">
    <location>
        <begin position="1"/>
        <end position="12"/>
    </location>
</feature>
<feature type="modified residue" description="Phenylalanine amide; in Conorfamide As2a" evidence="2">
    <location>
        <position position="12"/>
    </location>
</feature>
<accession>P0DQH8</accession>
<organism>
    <name type="scientific">Conus cancellatus</name>
    <name type="common">Cancellate cone</name>
    <name type="synonym">Conus austini</name>
    <dbReference type="NCBI Taxonomy" id="289020"/>
    <lineage>
        <taxon>Eukaryota</taxon>
        <taxon>Metazoa</taxon>
        <taxon>Spiralia</taxon>
        <taxon>Lophotrochozoa</taxon>
        <taxon>Mollusca</taxon>
        <taxon>Gastropoda</taxon>
        <taxon>Caenogastropoda</taxon>
        <taxon>Neogastropoda</taxon>
        <taxon>Conoidea</taxon>
        <taxon>Conidae</taxon>
        <taxon>Conus</taxon>
        <taxon>Dauciconus</taxon>
    </lineage>
</organism>
<keyword id="KW-0008">Acetylcholine receptor inhibiting toxin</keyword>
<keyword id="KW-0027">Amidation</keyword>
<keyword id="KW-0903">Direct protein sequencing</keyword>
<keyword id="KW-0872">Ion channel impairing toxin</keyword>
<keyword id="KW-0528">Neurotoxin</keyword>
<keyword id="KW-0629">Postsynaptic neurotoxin</keyword>
<keyword id="KW-1275">Proton-gated sodium channel impairing toxin</keyword>
<keyword id="KW-0964">Secreted</keyword>
<keyword id="KW-0800">Toxin</keyword>
<name>CRF2_CONCF</name>
<protein>
    <recommendedName>
        <fullName evidence="5">Conorfamide-As2</fullName>
    </recommendedName>
    <alternativeName>
        <fullName evidence="3">Conorfamide-As2a</fullName>
        <shortName evidence="1">CNF-As2a</shortName>
        <shortName evidence="1">Cono-RFamide-As2a</shortName>
    </alternativeName>
    <alternativeName>
        <fullName evidence="3">Conorfamide-As2b</fullName>
        <shortName evidence="1">CNF-As2b</shortName>
        <shortName evidence="1">Cono-RFamide-As2b</shortName>
    </alternativeName>
</protein>
<comment type="function">
    <text evidence="2">Conorfamide As2a: this amidated form is active on both ASIC channels and nicotinic acetylcholine receptors (nAChRs) (PubMed:31028742). Potentiates ASIC1a (EC(50)=10.9 uM) (PubMed:31028742). Inhibits desensitization of ASIC1a and to a lesser degree ASIC3 currents, resulting in a sustained opening of channels in the presence of low pH (PubMed:31028742). Inhibits with a slow reversibility human alpha-7/CHRNA7 nAChRs (IC(50)=689-3867 nM) and with a rapid reversibility human alpha-1-beta-1-delta-epsilon (CHRNA1-CHRNB1-CHRND-CHRNE) nAChRs (IC(50)=208 nM) (PubMed:31028742).</text>
</comment>
<comment type="function">
    <text evidence="2">Conorfamide As2b: this non-amidated form is only weakly active on both ASIC channels and nicotinic acetylcholine receptors (nAChRs) (PubMed:31028742). Shows a very weak inhibition of peak current of rat ASIC1a and ASIC3 (PubMed:31028742). No inhibition or very weak desensitization of both rat ASIC1a and ASIC3 are observed (PubMed:31028742). Reversibly inhibits both human alpha-7/CHRNA7 nAChRs (IC(50)=2971-7036 nM) and human alpha-1-beta-1-delta-epsilon (CHRNA1-CHRNB1-CHRND-CHRNE) nAChRs (IC(50)=707 nM) (PubMed:31028742).</text>
</comment>
<comment type="subcellular location">
    <subcellularLocation>
        <location evidence="2">Secreted</location>
    </subcellularLocation>
</comment>
<comment type="tissue specificity">
    <text evidence="5">Expressed by the venom duct.</text>
</comment>
<comment type="PTM">
    <text evidence="2">Both amidated and non-amidated conorfamides As2 are found in the venom. Amidation is important since amidated peptide is more active.</text>
</comment>
<comment type="mass spectrometry" mass="1659.97" method="MALDI" evidence="2">
    <text>Conorfamide As2a.</text>
</comment>
<comment type="mass spectrometry" mass="1661.02" method="MALDI" evidence="2">
    <text>Conorfamide As2b.</text>
</comment>
<comment type="similarity">
    <text evidence="4">Belongs to the FARP (FMRFamide related peptide) family.</text>
</comment>